<dbReference type="EMBL" id="CH476627">
    <property type="protein sequence ID" value="EDO03182.1"/>
    <property type="molecule type" value="Genomic_DNA"/>
</dbReference>
<dbReference type="RefSeq" id="XP_001592741.1">
    <property type="nucleotide sequence ID" value="XM_001592691.1"/>
</dbReference>
<dbReference type="SMR" id="A7EK16"/>
<dbReference type="FunCoup" id="A7EK16">
    <property type="interactions" value="308"/>
</dbReference>
<dbReference type="STRING" id="665079.A7EK16"/>
<dbReference type="EnsemblFungi" id="EDO03182">
    <property type="protein sequence ID" value="EDO03182"/>
    <property type="gene ID" value="SS1G_05662"/>
</dbReference>
<dbReference type="GeneID" id="5489556"/>
<dbReference type="KEGG" id="ssl:SS1G_05662"/>
<dbReference type="VEuPathDB" id="FungiDB:sscle_05g048210"/>
<dbReference type="eggNOG" id="KOG0162">
    <property type="taxonomic scope" value="Eukaryota"/>
</dbReference>
<dbReference type="HOGENOM" id="CLU_000192_7_6_1"/>
<dbReference type="InParanoid" id="A7EK16"/>
<dbReference type="OMA" id="PPEEYQM"/>
<dbReference type="OrthoDB" id="6108017at2759"/>
<dbReference type="Proteomes" id="UP000001312">
    <property type="component" value="Unassembled WGS sequence"/>
</dbReference>
<dbReference type="GO" id="GO:0030479">
    <property type="term" value="C:actin cortical patch"/>
    <property type="evidence" value="ECO:0000318"/>
    <property type="project" value="GO_Central"/>
</dbReference>
<dbReference type="GO" id="GO:0015629">
    <property type="term" value="C:actin cytoskeleton"/>
    <property type="evidence" value="ECO:0000318"/>
    <property type="project" value="GO_Central"/>
</dbReference>
<dbReference type="GO" id="GO:0051285">
    <property type="term" value="C:cell cortex of cell tip"/>
    <property type="evidence" value="ECO:0007669"/>
    <property type="project" value="EnsemblFungi"/>
</dbReference>
<dbReference type="GO" id="GO:0051286">
    <property type="term" value="C:cell tip"/>
    <property type="evidence" value="ECO:0000318"/>
    <property type="project" value="GO_Central"/>
</dbReference>
<dbReference type="GO" id="GO:0005737">
    <property type="term" value="C:cytoplasm"/>
    <property type="evidence" value="ECO:0000318"/>
    <property type="project" value="GO_Central"/>
</dbReference>
<dbReference type="GO" id="GO:0043332">
    <property type="term" value="C:mating projection tip"/>
    <property type="evidence" value="ECO:0007669"/>
    <property type="project" value="EnsemblFungi"/>
</dbReference>
<dbReference type="GO" id="GO:0031097">
    <property type="term" value="C:medial cortex"/>
    <property type="evidence" value="ECO:0007669"/>
    <property type="project" value="EnsemblFungi"/>
</dbReference>
<dbReference type="GO" id="GO:0045160">
    <property type="term" value="C:myosin I complex"/>
    <property type="evidence" value="ECO:0007669"/>
    <property type="project" value="EnsemblFungi"/>
</dbReference>
<dbReference type="GO" id="GO:0005886">
    <property type="term" value="C:plasma membrane"/>
    <property type="evidence" value="ECO:0000318"/>
    <property type="project" value="GO_Central"/>
</dbReference>
<dbReference type="GO" id="GO:0044853">
    <property type="term" value="C:plasma membrane raft"/>
    <property type="evidence" value="ECO:0007669"/>
    <property type="project" value="EnsemblFungi"/>
</dbReference>
<dbReference type="GO" id="GO:0005628">
    <property type="term" value="C:prospore membrane"/>
    <property type="evidence" value="ECO:0007669"/>
    <property type="project" value="EnsemblFungi"/>
</dbReference>
<dbReference type="GO" id="GO:0051015">
    <property type="term" value="F:actin filament binding"/>
    <property type="evidence" value="ECO:0000318"/>
    <property type="project" value="GO_Central"/>
</dbReference>
<dbReference type="GO" id="GO:0071933">
    <property type="term" value="F:Arp2/3 complex binding"/>
    <property type="evidence" value="ECO:0007669"/>
    <property type="project" value="EnsemblFungi"/>
</dbReference>
<dbReference type="GO" id="GO:0005524">
    <property type="term" value="F:ATP binding"/>
    <property type="evidence" value="ECO:0007669"/>
    <property type="project" value="UniProtKB-KW"/>
</dbReference>
<dbReference type="GO" id="GO:0016787">
    <property type="term" value="F:hydrolase activity"/>
    <property type="evidence" value="ECO:0007669"/>
    <property type="project" value="UniProtKB-KW"/>
</dbReference>
<dbReference type="GO" id="GO:0000146">
    <property type="term" value="F:microfilament motor activity"/>
    <property type="evidence" value="ECO:0000318"/>
    <property type="project" value="GO_Central"/>
</dbReference>
<dbReference type="GO" id="GO:0000147">
    <property type="term" value="P:actin cortical patch assembly"/>
    <property type="evidence" value="ECO:0007669"/>
    <property type="project" value="EnsemblFungi"/>
</dbReference>
<dbReference type="GO" id="GO:0051666">
    <property type="term" value="P:actin cortical patch localization"/>
    <property type="evidence" value="ECO:0000318"/>
    <property type="project" value="GO_Central"/>
</dbReference>
<dbReference type="GO" id="GO:0007015">
    <property type="term" value="P:actin filament organization"/>
    <property type="evidence" value="ECO:0000318"/>
    <property type="project" value="GO_Central"/>
</dbReference>
<dbReference type="GO" id="GO:0006897">
    <property type="term" value="P:endocytosis"/>
    <property type="evidence" value="ECO:0000318"/>
    <property type="project" value="GO_Central"/>
</dbReference>
<dbReference type="GO" id="GO:0000281">
    <property type="term" value="P:mitotic cytokinesis"/>
    <property type="evidence" value="ECO:0007669"/>
    <property type="project" value="EnsemblFungi"/>
</dbReference>
<dbReference type="CDD" id="cd01378">
    <property type="entry name" value="MYSc_Myo1"/>
    <property type="match status" value="1"/>
</dbReference>
<dbReference type="CDD" id="cd11858">
    <property type="entry name" value="SH3_Myosin-I_fungi"/>
    <property type="match status" value="1"/>
</dbReference>
<dbReference type="FunFam" id="1.10.10.820:FF:000001">
    <property type="entry name" value="Myosin heavy chain"/>
    <property type="match status" value="1"/>
</dbReference>
<dbReference type="FunFam" id="1.20.5.4820:FF:000004">
    <property type="entry name" value="Myosin IE"/>
    <property type="match status" value="1"/>
</dbReference>
<dbReference type="FunFam" id="1.20.58.530:FF:000007">
    <property type="entry name" value="Myosin IE"/>
    <property type="match status" value="1"/>
</dbReference>
<dbReference type="Gene3D" id="1.10.10.820">
    <property type="match status" value="1"/>
</dbReference>
<dbReference type="Gene3D" id="1.20.5.4820">
    <property type="match status" value="1"/>
</dbReference>
<dbReference type="Gene3D" id="1.20.58.530">
    <property type="match status" value="1"/>
</dbReference>
<dbReference type="Gene3D" id="3.40.850.10">
    <property type="entry name" value="Kinesin motor domain"/>
    <property type="match status" value="1"/>
</dbReference>
<dbReference type="Gene3D" id="1.20.120.720">
    <property type="entry name" value="Myosin VI head, motor domain, U50 subdomain"/>
    <property type="match status" value="1"/>
</dbReference>
<dbReference type="Gene3D" id="2.30.30.40">
    <property type="entry name" value="SH3 Domains"/>
    <property type="match status" value="1"/>
</dbReference>
<dbReference type="InterPro" id="IPR035535">
    <property type="entry name" value="Fungal_myosin-I_SH3"/>
</dbReference>
<dbReference type="InterPro" id="IPR036961">
    <property type="entry name" value="Kinesin_motor_dom_sf"/>
</dbReference>
<dbReference type="InterPro" id="IPR054489">
    <property type="entry name" value="Myo1_CA"/>
</dbReference>
<dbReference type="InterPro" id="IPR001609">
    <property type="entry name" value="Myosin_head_motor_dom-like"/>
</dbReference>
<dbReference type="InterPro" id="IPR010926">
    <property type="entry name" value="Myosin_TH1"/>
</dbReference>
<dbReference type="InterPro" id="IPR036072">
    <property type="entry name" value="MYSc_Myo1"/>
</dbReference>
<dbReference type="InterPro" id="IPR027417">
    <property type="entry name" value="P-loop_NTPase"/>
</dbReference>
<dbReference type="InterPro" id="IPR036028">
    <property type="entry name" value="SH3-like_dom_sf"/>
</dbReference>
<dbReference type="InterPro" id="IPR001452">
    <property type="entry name" value="SH3_domain"/>
</dbReference>
<dbReference type="PANTHER" id="PTHR13140">
    <property type="entry name" value="MYOSIN"/>
    <property type="match status" value="1"/>
</dbReference>
<dbReference type="PANTHER" id="PTHR13140:SF837">
    <property type="entry name" value="MYOSIN-3-RELATED"/>
    <property type="match status" value="1"/>
</dbReference>
<dbReference type="Pfam" id="PF22773">
    <property type="entry name" value="Myo1_CA"/>
    <property type="match status" value="1"/>
</dbReference>
<dbReference type="Pfam" id="PF00063">
    <property type="entry name" value="Myosin_head"/>
    <property type="match status" value="1"/>
</dbReference>
<dbReference type="Pfam" id="PF06017">
    <property type="entry name" value="Myosin_TH1"/>
    <property type="match status" value="1"/>
</dbReference>
<dbReference type="Pfam" id="PF00018">
    <property type="entry name" value="SH3_1"/>
    <property type="match status" value="1"/>
</dbReference>
<dbReference type="PRINTS" id="PR00193">
    <property type="entry name" value="MYOSINHEAVY"/>
</dbReference>
<dbReference type="SMART" id="SM00242">
    <property type="entry name" value="MYSc"/>
    <property type="match status" value="1"/>
</dbReference>
<dbReference type="SMART" id="SM00326">
    <property type="entry name" value="SH3"/>
    <property type="match status" value="1"/>
</dbReference>
<dbReference type="SUPFAM" id="SSF52540">
    <property type="entry name" value="P-loop containing nucleoside triphosphate hydrolases"/>
    <property type="match status" value="1"/>
</dbReference>
<dbReference type="SUPFAM" id="SSF50044">
    <property type="entry name" value="SH3-domain"/>
    <property type="match status" value="1"/>
</dbReference>
<dbReference type="PROSITE" id="PS51456">
    <property type="entry name" value="MYOSIN_MOTOR"/>
    <property type="match status" value="1"/>
</dbReference>
<dbReference type="PROSITE" id="PS50002">
    <property type="entry name" value="SH3"/>
    <property type="match status" value="1"/>
</dbReference>
<dbReference type="PROSITE" id="PS51757">
    <property type="entry name" value="TH1"/>
    <property type="match status" value="1"/>
</dbReference>
<proteinExistence type="inferred from homology"/>
<name>MYO1_SCLS1</name>
<evidence type="ECO:0000250" key="1"/>
<evidence type="ECO:0000255" key="2"/>
<evidence type="ECO:0000255" key="3">
    <source>
        <dbReference type="PROSITE-ProRule" id="PRU00192"/>
    </source>
</evidence>
<evidence type="ECO:0000255" key="4">
    <source>
        <dbReference type="PROSITE-ProRule" id="PRU00782"/>
    </source>
</evidence>
<evidence type="ECO:0000255" key="5">
    <source>
        <dbReference type="PROSITE-ProRule" id="PRU01093"/>
    </source>
</evidence>
<evidence type="ECO:0000256" key="6">
    <source>
        <dbReference type="SAM" id="MobiDB-lite"/>
    </source>
</evidence>
<evidence type="ECO:0000305" key="7"/>
<feature type="chain" id="PRO_0000338561" description="Myosin-1">
    <location>
        <begin position="1"/>
        <end position="1230"/>
    </location>
</feature>
<feature type="domain" description="Myosin motor" evidence="4">
    <location>
        <begin position="39"/>
        <end position="713"/>
    </location>
</feature>
<feature type="domain" description="IQ 1">
    <location>
        <begin position="717"/>
        <end position="737"/>
    </location>
</feature>
<feature type="domain" description="IQ 2">
    <location>
        <begin position="738"/>
        <end position="763"/>
    </location>
</feature>
<feature type="domain" description="TH1" evidence="5">
    <location>
        <begin position="771"/>
        <end position="961"/>
    </location>
</feature>
<feature type="domain" description="SH3" evidence="3">
    <location>
        <begin position="1064"/>
        <end position="1123"/>
    </location>
</feature>
<feature type="region of interest" description="Disordered" evidence="6">
    <location>
        <begin position="1"/>
        <end position="32"/>
    </location>
</feature>
<feature type="region of interest" description="Actin-binding" evidence="1">
    <location>
        <begin position="403"/>
        <end position="485"/>
    </location>
</feature>
<feature type="region of interest" description="Disordered" evidence="6">
    <location>
        <begin position="945"/>
        <end position="1018"/>
    </location>
</feature>
<feature type="region of interest" description="Disordered" evidence="6">
    <location>
        <begin position="1033"/>
        <end position="1065"/>
    </location>
</feature>
<feature type="region of interest" description="Disordered" evidence="6">
    <location>
        <begin position="1116"/>
        <end position="1230"/>
    </location>
</feature>
<feature type="compositionally biased region" description="Polar residues" evidence="6">
    <location>
        <begin position="1033"/>
        <end position="1045"/>
    </location>
</feature>
<feature type="compositionally biased region" description="Pro residues" evidence="6">
    <location>
        <begin position="1047"/>
        <end position="1062"/>
    </location>
</feature>
<feature type="compositionally biased region" description="Pro residues" evidence="6">
    <location>
        <begin position="1122"/>
        <end position="1142"/>
    </location>
</feature>
<feature type="compositionally biased region" description="Low complexity" evidence="6">
    <location>
        <begin position="1179"/>
        <end position="1214"/>
    </location>
</feature>
<feature type="binding site" evidence="2">
    <location>
        <begin position="132"/>
        <end position="139"/>
    </location>
    <ligand>
        <name>ATP</name>
        <dbReference type="ChEBI" id="CHEBI:30616"/>
    </ligand>
</feature>
<organism>
    <name type="scientific">Sclerotinia sclerotiorum (strain ATCC 18683 / 1980 / Ss-1)</name>
    <name type="common">White mold</name>
    <name type="synonym">Whetzelinia sclerotiorum</name>
    <dbReference type="NCBI Taxonomy" id="665079"/>
    <lineage>
        <taxon>Eukaryota</taxon>
        <taxon>Fungi</taxon>
        <taxon>Dikarya</taxon>
        <taxon>Ascomycota</taxon>
        <taxon>Pezizomycotina</taxon>
        <taxon>Leotiomycetes</taxon>
        <taxon>Helotiales</taxon>
        <taxon>Sclerotiniaceae</taxon>
        <taxon>Sclerotinia</taxon>
    </lineage>
</organism>
<reference key="1">
    <citation type="journal article" date="2011" name="PLoS Genet.">
        <title>Genomic analysis of the necrotrophic fungal pathogens Sclerotinia sclerotiorum and Botrytis cinerea.</title>
        <authorList>
            <person name="Amselem J."/>
            <person name="Cuomo C.A."/>
            <person name="van Kan J.A.L."/>
            <person name="Viaud M."/>
            <person name="Benito E.P."/>
            <person name="Couloux A."/>
            <person name="Coutinho P.M."/>
            <person name="de Vries R.P."/>
            <person name="Dyer P.S."/>
            <person name="Fillinger S."/>
            <person name="Fournier E."/>
            <person name="Gout L."/>
            <person name="Hahn M."/>
            <person name="Kohn L."/>
            <person name="Lapalu N."/>
            <person name="Plummer K.M."/>
            <person name="Pradier J.-M."/>
            <person name="Quevillon E."/>
            <person name="Sharon A."/>
            <person name="Simon A."/>
            <person name="ten Have A."/>
            <person name="Tudzynski B."/>
            <person name="Tudzynski P."/>
            <person name="Wincker P."/>
            <person name="Andrew M."/>
            <person name="Anthouard V."/>
            <person name="Beever R.E."/>
            <person name="Beffa R."/>
            <person name="Benoit I."/>
            <person name="Bouzid O."/>
            <person name="Brault B."/>
            <person name="Chen Z."/>
            <person name="Choquer M."/>
            <person name="Collemare J."/>
            <person name="Cotton P."/>
            <person name="Danchin E.G."/>
            <person name="Da Silva C."/>
            <person name="Gautier A."/>
            <person name="Giraud C."/>
            <person name="Giraud T."/>
            <person name="Gonzalez C."/>
            <person name="Grossetete S."/>
            <person name="Gueldener U."/>
            <person name="Henrissat B."/>
            <person name="Howlett B.J."/>
            <person name="Kodira C."/>
            <person name="Kretschmer M."/>
            <person name="Lappartient A."/>
            <person name="Leroch M."/>
            <person name="Levis C."/>
            <person name="Mauceli E."/>
            <person name="Neuveglise C."/>
            <person name="Oeser B."/>
            <person name="Pearson M."/>
            <person name="Poulain J."/>
            <person name="Poussereau N."/>
            <person name="Quesneville H."/>
            <person name="Rascle C."/>
            <person name="Schumacher J."/>
            <person name="Segurens B."/>
            <person name="Sexton A."/>
            <person name="Silva E."/>
            <person name="Sirven C."/>
            <person name="Soanes D.M."/>
            <person name="Talbot N.J."/>
            <person name="Templeton M."/>
            <person name="Yandava C."/>
            <person name="Yarden O."/>
            <person name="Zeng Q."/>
            <person name="Rollins J.A."/>
            <person name="Lebrun M.-H."/>
            <person name="Dickman M."/>
        </authorList>
    </citation>
    <scope>NUCLEOTIDE SEQUENCE [LARGE SCALE GENOMIC DNA]</scope>
    <source>
        <strain>ATCC 18683 / 1980 / Ss-1</strain>
    </source>
</reference>
<accession>A7EK16</accession>
<sequence>MGISRRPKADKNASAADSAPGGKPNIQKAQFDTTKKKEVGVSDLTLISKVSNEAINENLKKRFDNREIYTYIGHVLVSVNPFRDLGIYTDAVLESYKGKNRLEMPPHVFAVAESAYYNMNAYKDNQCVIISGESGAGKTEAAKRIMQYIANVSGGSNSSIQETKEMVLATNPLLESFGNAKTLRNNNSSRFGKYLQLQFNAQGEPVGADITNYLLEKTRVVTQIKDERNFHIFYQFTKGASQAYRESYGIQQPSQYLYTSKAGCFDVDGIDDLAEYQDTLQAMKVIGLSQAEQDEIFRMLAAILWTGNIQFREGDDGYATVVDQSVVDFLAYLLDVDAAHVIQAITIRILTPRNGEVIESPANVPQAMATRDALAKAIYNNLFDWIVERVNKSLTARAETSNSIGILDIYGFEIFEQNSFEQLCINYVNEKLQQIFIQLTLKTEQEEYAREQIKWTPIKYFDNKIVCDLIEAIRPPGVFSAMKDATKTAHADPAACDRTFMQAISGMSNPHLTPRQGNFIIKHYAGDVSYTVEGITDKNKDQLLKGLLNLFGQSRNHFIHELFPHQVDQDNRKQPPSAGDKIKASANDLVTTLMKATPSYIRTIKPNENKSPTEYNEKNVLHQVKYLGLQENVRIRRAGFAYRQTFDKFVERFYLLSPKTSYAGDYIWTGDSKTGAMQILKDTNIPVEEYQMGVTKAFIKAPETLFALEHMRDRYWHNMAARIQRVWRAFLQIRIEAATRIQRMFRKKREGKEFLELREKGHQILQGRKERRRYSLLGSRRFMGDYLGIAATTGPGSKIRGSINLPASEVTLFSCRGEILETKFGRSSKLSPRIFIMTRTKFYIVSQLLVNKQVQIAVEKAIPLGAIKFVSISTCRDDWFSLGVGSPQEADPLLTCVFKTELFTHMQAAMPGGGFNLKIGDSIEYAKKPNKMQLIKVVKDSQQAQDHYKSATIHTQAGEPPNSRSKPLPKGKPVAAKPFTSGRLIKPGGPGGRPSRLTNGNRPTPKPVPTPAPAAARPVPAVNPVAASIPVHTRNTSVQSTQSTRAVPPPPPPAPPAPPPAPVSKEPQYRVLYEFAGQSANEFSLKQGEIVTVLQKETNGWWLTKNVRGQGWAPTAYLEEVTPPPPPPVATRPAPPPAPGPPKMNGTNGAAIRSKPTPPAPPAKRPAAGRKPAPPPAPRDSGMSISSNGSGNNSGRSTPTPSLAGGLAEALRARQSAMQGNAKREDEDDW</sequence>
<protein>
    <recommendedName>
        <fullName>Myosin-1</fullName>
    </recommendedName>
    <alternativeName>
        <fullName>Class I unconventional myosin</fullName>
    </alternativeName>
    <alternativeName>
        <fullName>Type I myosin</fullName>
    </alternativeName>
</protein>
<gene>
    <name type="primary">myoA</name>
    <name type="ORF">SS1G_05662</name>
</gene>
<comment type="function">
    <text evidence="1">Type-I myosin implicated in the organization of the actin cytoskeleton. Required for proper actin cytoskeleton polarization. At the cell cortex, assembles in patch-like structures together with proteins from the actin-polymerizing machinery and promotes actin assembly. Functions as actin nucleation-promoting factor (NPF) for the Arp2/3 complex (By similarity).</text>
</comment>
<comment type="subcellular location">
    <subcellularLocation>
        <location evidence="1">Cytoplasm</location>
        <location evidence="1">Cytoskeleton</location>
        <location evidence="1">Actin patch</location>
    </subcellularLocation>
</comment>
<comment type="domain">
    <text evidence="1">The myosin motor domain displays actin-stimulated ATPase activity and generates a mechanochemical force.</text>
</comment>
<comment type="domain">
    <text evidence="1">The tail domain participates in molecular interactions that specify the role of the motor domain (By similarity). It is composed of several tail homology (TH) domains, namely a putative phospholipid-binding myosin tail domain (also named TH1), an Ala- and Pro-rich domain (TH2), followed by an SH3 domain and a C-terminal acidic domain (TH3).</text>
</comment>
<comment type="similarity">
    <text evidence="7">Belongs to the TRAFAC class myosin-kinesin ATPase superfamily. Myosin family.</text>
</comment>
<keyword id="KW-0009">Actin-binding</keyword>
<keyword id="KW-0067">ATP-binding</keyword>
<keyword id="KW-0963">Cytoplasm</keyword>
<keyword id="KW-0206">Cytoskeleton</keyword>
<keyword id="KW-0378">Hydrolase</keyword>
<keyword id="KW-0505">Motor protein</keyword>
<keyword id="KW-0518">Myosin</keyword>
<keyword id="KW-0547">Nucleotide-binding</keyword>
<keyword id="KW-1185">Reference proteome</keyword>
<keyword id="KW-0677">Repeat</keyword>
<keyword id="KW-0728">SH3 domain</keyword>